<sequence length="240" mass="26041">MADIRITGRMVNFSRITFDTNDHDVIRQQLSNILNEGSYQGTVVIIDSTVEQELIALIQLLVSLGLQPMAVIDGILGDEARAIQFPVLPADQPLQRIKPTAEQVAIVEKPSSAQASVETKKPLNNNAVAHITSYHDEILRTGQSLVQDQGDIILKAAMNSGSEVIASGNIHIYGTVRGRVIAGAGGHAAARIFCQSLEAELVSIAGTYCVADDIPKHVVKKPVHIYLNEKQELEFEALEL</sequence>
<accession>B0V8Z3</accession>
<protein>
    <recommendedName>
        <fullName evidence="1">Probable septum site-determining protein MinC</fullName>
    </recommendedName>
</protein>
<keyword id="KW-0131">Cell cycle</keyword>
<keyword id="KW-0132">Cell division</keyword>
<keyword id="KW-0717">Septation</keyword>
<feature type="chain" id="PRO_1000114264" description="Probable septum site-determining protein MinC">
    <location>
        <begin position="1"/>
        <end position="240"/>
    </location>
</feature>
<evidence type="ECO:0000255" key="1">
    <source>
        <dbReference type="HAMAP-Rule" id="MF_00267"/>
    </source>
</evidence>
<gene>
    <name evidence="1" type="primary">minC</name>
    <name type="ordered locus">ABAYE2934</name>
</gene>
<reference key="1">
    <citation type="journal article" date="2008" name="PLoS ONE">
        <title>Comparative analysis of Acinetobacters: three genomes for three lifestyles.</title>
        <authorList>
            <person name="Vallenet D."/>
            <person name="Nordmann P."/>
            <person name="Barbe V."/>
            <person name="Poirel L."/>
            <person name="Mangenot S."/>
            <person name="Bataille E."/>
            <person name="Dossat C."/>
            <person name="Gas S."/>
            <person name="Kreimeyer A."/>
            <person name="Lenoble P."/>
            <person name="Oztas S."/>
            <person name="Poulain J."/>
            <person name="Segurens B."/>
            <person name="Robert C."/>
            <person name="Abergel C."/>
            <person name="Claverie J.-M."/>
            <person name="Raoult D."/>
            <person name="Medigue C."/>
            <person name="Weissenbach J."/>
            <person name="Cruveiller S."/>
        </authorList>
    </citation>
    <scope>NUCLEOTIDE SEQUENCE [LARGE SCALE GENOMIC DNA]</scope>
    <source>
        <strain>AYE</strain>
    </source>
</reference>
<name>MINC_ACIBY</name>
<proteinExistence type="inferred from homology"/>
<dbReference type="EMBL" id="CU459141">
    <property type="protein sequence ID" value="CAM87756.1"/>
    <property type="molecule type" value="Genomic_DNA"/>
</dbReference>
<dbReference type="RefSeq" id="WP_000763673.1">
    <property type="nucleotide sequence ID" value="NZ_JBDGFB010000015.1"/>
</dbReference>
<dbReference type="SMR" id="B0V8Z3"/>
<dbReference type="EnsemblBacteria" id="CAM87756">
    <property type="protein sequence ID" value="CAM87756"/>
    <property type="gene ID" value="ABAYE2934"/>
</dbReference>
<dbReference type="KEGG" id="aby:ABAYE2934"/>
<dbReference type="HOGENOM" id="CLU_067812_0_1_6"/>
<dbReference type="GO" id="GO:0000902">
    <property type="term" value="P:cell morphogenesis"/>
    <property type="evidence" value="ECO:0007669"/>
    <property type="project" value="InterPro"/>
</dbReference>
<dbReference type="GO" id="GO:0000917">
    <property type="term" value="P:division septum assembly"/>
    <property type="evidence" value="ECO:0007669"/>
    <property type="project" value="UniProtKB-KW"/>
</dbReference>
<dbReference type="GO" id="GO:0051302">
    <property type="term" value="P:regulation of cell division"/>
    <property type="evidence" value="ECO:0007669"/>
    <property type="project" value="InterPro"/>
</dbReference>
<dbReference type="GO" id="GO:1901891">
    <property type="term" value="P:regulation of cell septum assembly"/>
    <property type="evidence" value="ECO:0007669"/>
    <property type="project" value="InterPro"/>
</dbReference>
<dbReference type="Gene3D" id="2.160.20.70">
    <property type="match status" value="1"/>
</dbReference>
<dbReference type="Gene3D" id="3.30.70.260">
    <property type="match status" value="1"/>
</dbReference>
<dbReference type="HAMAP" id="MF_00267">
    <property type="entry name" value="MinC"/>
    <property type="match status" value="1"/>
</dbReference>
<dbReference type="InterPro" id="IPR016098">
    <property type="entry name" value="CAP/MinC_C"/>
</dbReference>
<dbReference type="InterPro" id="IPR013033">
    <property type="entry name" value="MinC"/>
</dbReference>
<dbReference type="InterPro" id="IPR036145">
    <property type="entry name" value="MinC_C_sf"/>
</dbReference>
<dbReference type="InterPro" id="IPR007874">
    <property type="entry name" value="MinC_N"/>
</dbReference>
<dbReference type="InterPro" id="IPR005526">
    <property type="entry name" value="Septum_form_inhib_MinC_C"/>
</dbReference>
<dbReference type="NCBIfam" id="TIGR01222">
    <property type="entry name" value="minC"/>
    <property type="match status" value="1"/>
</dbReference>
<dbReference type="PANTHER" id="PTHR34108">
    <property type="entry name" value="SEPTUM SITE-DETERMINING PROTEIN MINC"/>
    <property type="match status" value="1"/>
</dbReference>
<dbReference type="PANTHER" id="PTHR34108:SF1">
    <property type="entry name" value="SEPTUM SITE-DETERMINING PROTEIN MINC"/>
    <property type="match status" value="1"/>
</dbReference>
<dbReference type="Pfam" id="PF03775">
    <property type="entry name" value="MinC_C"/>
    <property type="match status" value="1"/>
</dbReference>
<dbReference type="Pfam" id="PF05209">
    <property type="entry name" value="MinC_N"/>
    <property type="match status" value="1"/>
</dbReference>
<dbReference type="SUPFAM" id="SSF63848">
    <property type="entry name" value="Cell-division inhibitor MinC, C-terminal domain"/>
    <property type="match status" value="1"/>
</dbReference>
<comment type="function">
    <text evidence="1">Cell division inhibitor that blocks the formation of polar Z ring septums. Rapidly oscillates between the poles of the cell to destabilize FtsZ filaments that have formed before they mature into polar Z rings. Prevents FtsZ polymerization.</text>
</comment>
<comment type="subunit">
    <text evidence="1">Interacts with MinD and FtsZ.</text>
</comment>
<comment type="similarity">
    <text evidence="1">Belongs to the MinC family.</text>
</comment>
<organism>
    <name type="scientific">Acinetobacter baumannii (strain AYE)</name>
    <dbReference type="NCBI Taxonomy" id="509173"/>
    <lineage>
        <taxon>Bacteria</taxon>
        <taxon>Pseudomonadati</taxon>
        <taxon>Pseudomonadota</taxon>
        <taxon>Gammaproteobacteria</taxon>
        <taxon>Moraxellales</taxon>
        <taxon>Moraxellaceae</taxon>
        <taxon>Acinetobacter</taxon>
        <taxon>Acinetobacter calcoaceticus/baumannii complex</taxon>
    </lineage>
</organism>